<keyword id="KW-0963">Cytoplasm</keyword>
<keyword id="KW-0489">Methyltransferase</keyword>
<keyword id="KW-0698">rRNA processing</keyword>
<keyword id="KW-0949">S-adenosyl-L-methionine</keyword>
<keyword id="KW-0808">Transferase</keyword>
<accession>Q0HLJ5</accession>
<comment type="function">
    <text evidence="1">Specifically methylates the pseudouridine at position 1915 (m3Psi1915) in 23S rRNA.</text>
</comment>
<comment type="catalytic activity">
    <reaction evidence="1">
        <text>pseudouridine(1915) in 23S rRNA + S-adenosyl-L-methionine = N(3)-methylpseudouridine(1915) in 23S rRNA + S-adenosyl-L-homocysteine + H(+)</text>
        <dbReference type="Rhea" id="RHEA:42752"/>
        <dbReference type="Rhea" id="RHEA-COMP:10221"/>
        <dbReference type="Rhea" id="RHEA-COMP:10222"/>
        <dbReference type="ChEBI" id="CHEBI:15378"/>
        <dbReference type="ChEBI" id="CHEBI:57856"/>
        <dbReference type="ChEBI" id="CHEBI:59789"/>
        <dbReference type="ChEBI" id="CHEBI:65314"/>
        <dbReference type="ChEBI" id="CHEBI:74486"/>
        <dbReference type="EC" id="2.1.1.177"/>
    </reaction>
</comment>
<comment type="subunit">
    <text evidence="1">Homodimer.</text>
</comment>
<comment type="subcellular location">
    <subcellularLocation>
        <location evidence="1">Cytoplasm</location>
    </subcellularLocation>
</comment>
<comment type="similarity">
    <text evidence="1">Belongs to the RNA methyltransferase RlmH family.</text>
</comment>
<gene>
    <name evidence="1" type="primary">rlmH</name>
    <name type="ordered locus">Shewmr4_0992</name>
</gene>
<evidence type="ECO:0000255" key="1">
    <source>
        <dbReference type="HAMAP-Rule" id="MF_00658"/>
    </source>
</evidence>
<protein>
    <recommendedName>
        <fullName evidence="1">Ribosomal RNA large subunit methyltransferase H</fullName>
        <ecNumber evidence="1">2.1.1.177</ecNumber>
    </recommendedName>
    <alternativeName>
        <fullName evidence="1">23S rRNA (pseudouridine1915-N3)-methyltransferase</fullName>
    </alternativeName>
    <alternativeName>
        <fullName evidence="1">23S rRNA m3Psi1915 methyltransferase</fullName>
    </alternativeName>
    <alternativeName>
        <fullName evidence="1">rRNA (pseudouridine-N3-)-methyltransferase RlmH</fullName>
    </alternativeName>
</protein>
<dbReference type="EC" id="2.1.1.177" evidence="1"/>
<dbReference type="EMBL" id="CP000446">
    <property type="protein sequence ID" value="ABI38072.1"/>
    <property type="molecule type" value="Genomic_DNA"/>
</dbReference>
<dbReference type="RefSeq" id="WP_011621784.1">
    <property type="nucleotide sequence ID" value="NC_008321.1"/>
</dbReference>
<dbReference type="SMR" id="Q0HLJ5"/>
<dbReference type="GeneID" id="94726978"/>
<dbReference type="KEGG" id="she:Shewmr4_0992"/>
<dbReference type="HOGENOM" id="CLU_100552_1_0_6"/>
<dbReference type="GO" id="GO:0005737">
    <property type="term" value="C:cytoplasm"/>
    <property type="evidence" value="ECO:0007669"/>
    <property type="project" value="UniProtKB-SubCell"/>
</dbReference>
<dbReference type="GO" id="GO:0070038">
    <property type="term" value="F:rRNA (pseudouridine-N3-)-methyltransferase activity"/>
    <property type="evidence" value="ECO:0007669"/>
    <property type="project" value="UniProtKB-UniRule"/>
</dbReference>
<dbReference type="CDD" id="cd18081">
    <property type="entry name" value="RlmH-like"/>
    <property type="match status" value="1"/>
</dbReference>
<dbReference type="Gene3D" id="3.40.1280.10">
    <property type="match status" value="1"/>
</dbReference>
<dbReference type="HAMAP" id="MF_00658">
    <property type="entry name" value="23SrRNA_methyltr_H"/>
    <property type="match status" value="1"/>
</dbReference>
<dbReference type="InterPro" id="IPR029028">
    <property type="entry name" value="Alpha/beta_knot_MTases"/>
</dbReference>
<dbReference type="InterPro" id="IPR003742">
    <property type="entry name" value="RlmH-like"/>
</dbReference>
<dbReference type="InterPro" id="IPR029026">
    <property type="entry name" value="tRNA_m1G_MTases_N"/>
</dbReference>
<dbReference type="NCBIfam" id="NF000984">
    <property type="entry name" value="PRK00103.1-1"/>
    <property type="match status" value="1"/>
</dbReference>
<dbReference type="NCBIfam" id="NF000986">
    <property type="entry name" value="PRK00103.1-4"/>
    <property type="match status" value="1"/>
</dbReference>
<dbReference type="NCBIfam" id="TIGR00246">
    <property type="entry name" value="tRNA_RlmH_YbeA"/>
    <property type="match status" value="1"/>
</dbReference>
<dbReference type="PANTHER" id="PTHR33603">
    <property type="entry name" value="METHYLTRANSFERASE"/>
    <property type="match status" value="1"/>
</dbReference>
<dbReference type="PANTHER" id="PTHR33603:SF1">
    <property type="entry name" value="RIBOSOMAL RNA LARGE SUBUNIT METHYLTRANSFERASE H"/>
    <property type="match status" value="1"/>
</dbReference>
<dbReference type="Pfam" id="PF02590">
    <property type="entry name" value="SPOUT_MTase"/>
    <property type="match status" value="1"/>
</dbReference>
<dbReference type="PIRSF" id="PIRSF004505">
    <property type="entry name" value="MT_bac"/>
    <property type="match status" value="1"/>
</dbReference>
<dbReference type="SUPFAM" id="SSF75217">
    <property type="entry name" value="alpha/beta knot"/>
    <property type="match status" value="1"/>
</dbReference>
<sequence>MKLQLIAVGTRMPDWVTRGFEEYQRRFPRDMALELIEIPAGKRGKNADIVRILQKEGEQMLAAIPKGNHIVTLDLPGKNWTTPELATAMNKWQLDGRDVSLLVGGPEGLAPACKEAAHQSWCLSALTLPHPLVRIVVAESLYRAWSVNTNHPYHRE</sequence>
<organism>
    <name type="scientific">Shewanella sp. (strain MR-4)</name>
    <dbReference type="NCBI Taxonomy" id="60480"/>
    <lineage>
        <taxon>Bacteria</taxon>
        <taxon>Pseudomonadati</taxon>
        <taxon>Pseudomonadota</taxon>
        <taxon>Gammaproteobacteria</taxon>
        <taxon>Alteromonadales</taxon>
        <taxon>Shewanellaceae</taxon>
        <taxon>Shewanella</taxon>
    </lineage>
</organism>
<name>RLMH_SHESM</name>
<feature type="chain" id="PRO_0000260606" description="Ribosomal RNA large subunit methyltransferase H">
    <location>
        <begin position="1"/>
        <end position="156"/>
    </location>
</feature>
<feature type="binding site" evidence="1">
    <location>
        <position position="73"/>
    </location>
    <ligand>
        <name>S-adenosyl-L-methionine</name>
        <dbReference type="ChEBI" id="CHEBI:59789"/>
    </ligand>
</feature>
<feature type="binding site" evidence="1">
    <location>
        <position position="104"/>
    </location>
    <ligand>
        <name>S-adenosyl-L-methionine</name>
        <dbReference type="ChEBI" id="CHEBI:59789"/>
    </ligand>
</feature>
<feature type="binding site" evidence="1">
    <location>
        <begin position="123"/>
        <end position="128"/>
    </location>
    <ligand>
        <name>S-adenosyl-L-methionine</name>
        <dbReference type="ChEBI" id="CHEBI:59789"/>
    </ligand>
</feature>
<reference key="1">
    <citation type="submission" date="2006-08" db="EMBL/GenBank/DDBJ databases">
        <title>Complete sequence of Shewanella sp. MR-4.</title>
        <authorList>
            <consortium name="US DOE Joint Genome Institute"/>
            <person name="Copeland A."/>
            <person name="Lucas S."/>
            <person name="Lapidus A."/>
            <person name="Barry K."/>
            <person name="Detter J.C."/>
            <person name="Glavina del Rio T."/>
            <person name="Hammon N."/>
            <person name="Israni S."/>
            <person name="Dalin E."/>
            <person name="Tice H."/>
            <person name="Pitluck S."/>
            <person name="Kiss H."/>
            <person name="Brettin T."/>
            <person name="Bruce D."/>
            <person name="Han C."/>
            <person name="Tapia R."/>
            <person name="Gilna P."/>
            <person name="Schmutz J."/>
            <person name="Larimer F."/>
            <person name="Land M."/>
            <person name="Hauser L."/>
            <person name="Kyrpides N."/>
            <person name="Mikhailova N."/>
            <person name="Nealson K."/>
            <person name="Konstantinidis K."/>
            <person name="Klappenbach J."/>
            <person name="Tiedje J."/>
            <person name="Richardson P."/>
        </authorList>
    </citation>
    <scope>NUCLEOTIDE SEQUENCE [LARGE SCALE GENOMIC DNA]</scope>
    <source>
        <strain>MR-4</strain>
    </source>
</reference>
<proteinExistence type="inferred from homology"/>